<feature type="chain" id="PRO_0000143659" description="Maturase K">
    <location>
        <begin position="1"/>
        <end position="504"/>
    </location>
</feature>
<name>MATK_QUECE</name>
<proteinExistence type="inferred from homology"/>
<dbReference type="EMBL" id="AB125034">
    <property type="protein sequence ID" value="BAD14097.1"/>
    <property type="molecule type" value="Genomic_DNA"/>
</dbReference>
<dbReference type="GO" id="GO:0009507">
    <property type="term" value="C:chloroplast"/>
    <property type="evidence" value="ECO:0007669"/>
    <property type="project" value="UniProtKB-SubCell"/>
</dbReference>
<dbReference type="GO" id="GO:0003723">
    <property type="term" value="F:RNA binding"/>
    <property type="evidence" value="ECO:0007669"/>
    <property type="project" value="UniProtKB-KW"/>
</dbReference>
<dbReference type="GO" id="GO:0006397">
    <property type="term" value="P:mRNA processing"/>
    <property type="evidence" value="ECO:0007669"/>
    <property type="project" value="UniProtKB-KW"/>
</dbReference>
<dbReference type="GO" id="GO:0008380">
    <property type="term" value="P:RNA splicing"/>
    <property type="evidence" value="ECO:0007669"/>
    <property type="project" value="UniProtKB-UniRule"/>
</dbReference>
<dbReference type="GO" id="GO:0008033">
    <property type="term" value="P:tRNA processing"/>
    <property type="evidence" value="ECO:0007669"/>
    <property type="project" value="UniProtKB-KW"/>
</dbReference>
<dbReference type="HAMAP" id="MF_01390">
    <property type="entry name" value="MatK"/>
    <property type="match status" value="1"/>
</dbReference>
<dbReference type="InterPro" id="IPR024937">
    <property type="entry name" value="Domain_X"/>
</dbReference>
<dbReference type="InterPro" id="IPR002866">
    <property type="entry name" value="Maturase_MatK"/>
</dbReference>
<dbReference type="InterPro" id="IPR024942">
    <property type="entry name" value="Maturase_MatK_N"/>
</dbReference>
<dbReference type="PANTHER" id="PTHR34811">
    <property type="entry name" value="MATURASE K"/>
    <property type="match status" value="1"/>
</dbReference>
<dbReference type="PANTHER" id="PTHR34811:SF1">
    <property type="entry name" value="MATURASE K"/>
    <property type="match status" value="1"/>
</dbReference>
<dbReference type="Pfam" id="PF01348">
    <property type="entry name" value="Intron_maturas2"/>
    <property type="match status" value="1"/>
</dbReference>
<dbReference type="Pfam" id="PF01824">
    <property type="entry name" value="MatK_N"/>
    <property type="match status" value="1"/>
</dbReference>
<protein>
    <recommendedName>
        <fullName evidence="1">Maturase K</fullName>
    </recommendedName>
    <alternativeName>
        <fullName evidence="1">Intron maturase</fullName>
    </alternativeName>
</protein>
<gene>
    <name evidence="1" type="primary">matK</name>
</gene>
<organism>
    <name type="scientific">Quercus cerris</name>
    <name type="common">Turkey oak</name>
    <dbReference type="NCBI Taxonomy" id="39468"/>
    <lineage>
        <taxon>Eukaryota</taxon>
        <taxon>Viridiplantae</taxon>
        <taxon>Streptophyta</taxon>
        <taxon>Embryophyta</taxon>
        <taxon>Tracheophyta</taxon>
        <taxon>Spermatophyta</taxon>
        <taxon>Magnoliopsida</taxon>
        <taxon>eudicotyledons</taxon>
        <taxon>Gunneridae</taxon>
        <taxon>Pentapetalae</taxon>
        <taxon>rosids</taxon>
        <taxon>fabids</taxon>
        <taxon>Fagales</taxon>
        <taxon>Fagaceae</taxon>
        <taxon>Quercus</taxon>
    </lineage>
</organism>
<accession>Q75VB5</accession>
<comment type="function">
    <text evidence="1">Usually encoded in the trnK tRNA gene intron. Probably assists in splicing its own and other chloroplast group II introns.</text>
</comment>
<comment type="subcellular location">
    <subcellularLocation>
        <location>Plastid</location>
        <location>Chloroplast</location>
    </subcellularLocation>
</comment>
<comment type="similarity">
    <text evidence="1">Belongs to the intron maturase 2 family. MatK subfamily.</text>
</comment>
<keyword id="KW-0150">Chloroplast</keyword>
<keyword id="KW-0507">mRNA processing</keyword>
<keyword id="KW-0934">Plastid</keyword>
<keyword id="KW-0694">RNA-binding</keyword>
<keyword id="KW-0819">tRNA processing</keyword>
<geneLocation type="chloroplast"/>
<evidence type="ECO:0000255" key="1">
    <source>
        <dbReference type="HAMAP-Rule" id="MF_01390"/>
    </source>
</evidence>
<sequence>MEEFQGYLELDRFRQHDFLYPFIFREYSYALAHGHGLNRYMLLENIGYDNKSSLLIVKRLITTMYQQNYLIISANDSKQNPFFGYNKNLHSKILSEGFAIIVEIPFYLRLISSLEGAEIVRFYNLRSIHSIFPFLEEKFPHLNYSADILIPYPAHLEILVQTLRYRVKDASYLHLLRFFLHEYSNCNSLIITNKSISIFSKSNPRFFLFLYNSYLCEYESIFLFLRNQSSHLRLTSSGVLFERLCLYRKIEHFAEVFANDFPVIPCFLKDPFMHYVRYQGKSILASKDTPLLMNKWKSYLVNLWQCHFDVWSHAASIRINQLSKHSLDFLSYFSSVRRNPAVVRNQMLENSFLLNNAPNKLDTIVPIIPLIGSLAKAKFCNAVGHPISKLTRADLSDFEIINRFLHICRNLSHYYSGSSKKKNMYRIKYILRLSCVKTLARKHKSTARAFLKRVDSEFFQEFFTEEGGFISLIFPRASFALRRLYSGRVWYLDIIFINGLSNHE</sequence>
<reference key="1">
    <citation type="journal article" date="2003" name="Tropics">
        <title>Phylogeny and genetic variation of Fagaceae in tropical montane forests.</title>
        <authorList>
            <person name="Kamiya K."/>
            <person name="Harada K."/>
            <person name="Ogino K."/>
            <person name="Mahani M.C."/>
            <person name="Latiff A."/>
        </authorList>
    </citation>
    <scope>NUCLEOTIDE SEQUENCE [GENOMIC DNA]</scope>
</reference>